<dbReference type="EMBL" id="EF432053">
    <property type="protein sequence ID" value="ABP73391.1"/>
    <property type="molecule type" value="Genomic_DNA"/>
</dbReference>
<dbReference type="EMBL" id="EF432053">
    <property type="protein sequence ID" value="ABP73447.1"/>
    <property type="molecule type" value="Genomic_DNA"/>
</dbReference>
<dbReference type="KEGG" id="vg:5129825"/>
<dbReference type="KEGG" id="vg:5129828"/>
<dbReference type="Proteomes" id="UP000000513">
    <property type="component" value="Segment"/>
</dbReference>
<organism>
    <name type="scientific">Acidianus bottle-shaped virus (isolate Italy/Pozzuoli)</name>
    <name type="common">ABV</name>
    <dbReference type="NCBI Taxonomy" id="654911"/>
    <lineage>
        <taxon>Viruses</taxon>
        <taxon>Viruses incertae sedis</taxon>
        <taxon>Ampullaviridae</taxon>
        <taxon>Bottigliavirus</taxon>
        <taxon>Bottigliavirus ABV</taxon>
    </lineage>
</organism>
<accession>A4ZU87</accession>
<gene>
    <name type="ORF">ORF81</name>
</gene>
<reference key="1">
    <citation type="journal article" date="2007" name="Virology">
        <title>Genome of the Acidianus bottle-shaped virus and insights into the replication and packaging mechanisms.</title>
        <authorList>
            <person name="Peng X."/>
            <person name="Basta T."/>
            <person name="Haring M."/>
            <person name="Garrett R.A."/>
            <person name="Prangishvili D."/>
        </authorList>
    </citation>
    <scope>NUCLEOTIDE SEQUENCE [GENOMIC DNA]</scope>
</reference>
<protein>
    <recommendedName>
        <fullName>Uncharacterized protein ORF81</fullName>
    </recommendedName>
</protein>
<feature type="chain" id="PRO_0000384836" description="Uncharacterized protein ORF81">
    <location>
        <begin position="1"/>
        <end position="81"/>
    </location>
</feature>
<name>Y081_ABVP</name>
<keyword id="KW-1185">Reference proteome</keyword>
<organismHost>
    <name type="scientific">Acidianus convivator</name>
    <dbReference type="NCBI Taxonomy" id="269667"/>
</organismHost>
<sequence length="81" mass="9321">MTTTHDTNTKKLKYQFHTIHSQRIMTTVTQKPFTASPYIFSTTLRTTQTDGNNAINSHSHTQAGYNNSSERFLYLICTYIT</sequence>
<proteinExistence type="predicted"/>